<name>BIOA_ANOFW</name>
<gene>
    <name evidence="1" type="primary">bioA</name>
    <name type="ordered locus">Aflv_1071</name>
</gene>
<reference key="1">
    <citation type="journal article" date="2008" name="Genome Biol.">
        <title>Encapsulated in silica: genome, proteome and physiology of the thermophilic bacterium Anoxybacillus flavithermus WK1.</title>
        <authorList>
            <person name="Saw J.H."/>
            <person name="Mountain B.W."/>
            <person name="Feng L."/>
            <person name="Omelchenko M.V."/>
            <person name="Hou S."/>
            <person name="Saito J.A."/>
            <person name="Stott M.B."/>
            <person name="Li D."/>
            <person name="Zhao G."/>
            <person name="Wu J."/>
            <person name="Galperin M.Y."/>
            <person name="Koonin E.V."/>
            <person name="Makarova K.S."/>
            <person name="Wolf Y.I."/>
            <person name="Rigden D.J."/>
            <person name="Dunfield P.F."/>
            <person name="Wang L."/>
            <person name="Alam M."/>
        </authorList>
    </citation>
    <scope>NUCLEOTIDE SEQUENCE [LARGE SCALE GENOMIC DNA]</scope>
    <source>
        <strain>DSM 21510 / WK1</strain>
    </source>
</reference>
<evidence type="ECO:0000255" key="1">
    <source>
        <dbReference type="HAMAP-Rule" id="MF_00834"/>
    </source>
</evidence>
<sequence length="454" mass="51193">MEKGMVAMNEWIEKSKTYLWLPFTQMKDYEQHPLVIESGEGIFLTDVNGKTYYDGYSSLWLNVHGHRKKEIDDAIRAQLERIAHSTLLGAANIPAIALAEKLIEWTPSHLTRVFYSDSGAEAVEIALKIAFQYWRNIGENKKQKFVTLANGYHGDTVGAISVGAIDIFHTVYEPLMFTSYKAPFPLVYRHPSNDPNVVRDEALGALEALFAEHHEEIAAMIVEGMIQGAGGMHVMPKGYLKGVEQLCRQYNILFIVDEVATGFGRTGKRFAIEHEDVQPDIMTVAKGITGGYLPIAATLTTEAIYEAFYGDYTEFKTFFHGHSYTGNQLGCAAALANIQIFERERLIEQIQQKATFVAEQLASFNELNHVGDVRQLGLMCGIELVRDRRTHEPYPWTERMGYRTTLTMREKGMLTRPLGDVIVFMPPLASTFEQLEAMIAMMKEAIIETTEKRG</sequence>
<dbReference type="EC" id="2.6.1.62" evidence="1"/>
<dbReference type="EMBL" id="CP000922">
    <property type="protein sequence ID" value="ACJ33447.1"/>
    <property type="molecule type" value="Genomic_DNA"/>
</dbReference>
<dbReference type="RefSeq" id="WP_012574710.1">
    <property type="nucleotide sequence ID" value="NC_011567.1"/>
</dbReference>
<dbReference type="SMR" id="B7GHM5"/>
<dbReference type="STRING" id="491915.Aflv_1071"/>
<dbReference type="GeneID" id="7037328"/>
<dbReference type="KEGG" id="afl:Aflv_1071"/>
<dbReference type="PATRIC" id="fig|491915.6.peg.1093"/>
<dbReference type="eggNOG" id="COG0161">
    <property type="taxonomic scope" value="Bacteria"/>
</dbReference>
<dbReference type="HOGENOM" id="CLU_016922_4_3_9"/>
<dbReference type="UniPathway" id="UPA00078">
    <property type="reaction ID" value="UER00160"/>
</dbReference>
<dbReference type="Proteomes" id="UP000000742">
    <property type="component" value="Chromosome"/>
</dbReference>
<dbReference type="GO" id="GO:0005737">
    <property type="term" value="C:cytoplasm"/>
    <property type="evidence" value="ECO:0007669"/>
    <property type="project" value="UniProtKB-SubCell"/>
</dbReference>
<dbReference type="GO" id="GO:0004015">
    <property type="term" value="F:adenosylmethionine-8-amino-7-oxononanoate transaminase activity"/>
    <property type="evidence" value="ECO:0007669"/>
    <property type="project" value="UniProtKB-UniRule"/>
</dbReference>
<dbReference type="GO" id="GO:0030170">
    <property type="term" value="F:pyridoxal phosphate binding"/>
    <property type="evidence" value="ECO:0007669"/>
    <property type="project" value="UniProtKB-UniRule"/>
</dbReference>
<dbReference type="GO" id="GO:0009102">
    <property type="term" value="P:biotin biosynthetic process"/>
    <property type="evidence" value="ECO:0007669"/>
    <property type="project" value="UniProtKB-UniRule"/>
</dbReference>
<dbReference type="CDD" id="cd00610">
    <property type="entry name" value="OAT_like"/>
    <property type="match status" value="1"/>
</dbReference>
<dbReference type="FunFam" id="3.40.640.10:FF:000078">
    <property type="entry name" value="Adenosylmethionine-8-amino-7-oxononanoate aminotransferase"/>
    <property type="match status" value="1"/>
</dbReference>
<dbReference type="Gene3D" id="3.90.1150.10">
    <property type="entry name" value="Aspartate Aminotransferase, domain 1"/>
    <property type="match status" value="1"/>
</dbReference>
<dbReference type="Gene3D" id="3.40.640.10">
    <property type="entry name" value="Type I PLP-dependent aspartate aminotransferase-like (Major domain)"/>
    <property type="match status" value="1"/>
</dbReference>
<dbReference type="HAMAP" id="MF_00834">
    <property type="entry name" value="BioA"/>
    <property type="match status" value="1"/>
</dbReference>
<dbReference type="InterPro" id="IPR005814">
    <property type="entry name" value="Aminotrans_3"/>
</dbReference>
<dbReference type="InterPro" id="IPR049704">
    <property type="entry name" value="Aminotrans_3_PPA_site"/>
</dbReference>
<dbReference type="InterPro" id="IPR005815">
    <property type="entry name" value="BioA"/>
</dbReference>
<dbReference type="InterPro" id="IPR015424">
    <property type="entry name" value="PyrdxlP-dep_Trfase"/>
</dbReference>
<dbReference type="InterPro" id="IPR015421">
    <property type="entry name" value="PyrdxlP-dep_Trfase_major"/>
</dbReference>
<dbReference type="InterPro" id="IPR015422">
    <property type="entry name" value="PyrdxlP-dep_Trfase_small"/>
</dbReference>
<dbReference type="NCBIfam" id="TIGR00508">
    <property type="entry name" value="bioA"/>
    <property type="match status" value="1"/>
</dbReference>
<dbReference type="PANTHER" id="PTHR42684">
    <property type="entry name" value="ADENOSYLMETHIONINE-8-AMINO-7-OXONONANOATE AMINOTRANSFERASE"/>
    <property type="match status" value="1"/>
</dbReference>
<dbReference type="PANTHER" id="PTHR42684:SF17">
    <property type="entry name" value="ADENOSYLMETHIONINE-8-AMINO-7-OXONONANOATE AMINOTRANSFERASE"/>
    <property type="match status" value="1"/>
</dbReference>
<dbReference type="Pfam" id="PF00202">
    <property type="entry name" value="Aminotran_3"/>
    <property type="match status" value="1"/>
</dbReference>
<dbReference type="SUPFAM" id="SSF53383">
    <property type="entry name" value="PLP-dependent transferases"/>
    <property type="match status" value="1"/>
</dbReference>
<dbReference type="PROSITE" id="PS00600">
    <property type="entry name" value="AA_TRANSFER_CLASS_3"/>
    <property type="match status" value="1"/>
</dbReference>
<organism>
    <name type="scientific">Anoxybacillus flavithermus (strain DSM 21510 / WK1)</name>
    <dbReference type="NCBI Taxonomy" id="491915"/>
    <lineage>
        <taxon>Bacteria</taxon>
        <taxon>Bacillati</taxon>
        <taxon>Bacillota</taxon>
        <taxon>Bacilli</taxon>
        <taxon>Bacillales</taxon>
        <taxon>Anoxybacillaceae</taxon>
        <taxon>Anoxybacillus</taxon>
    </lineage>
</organism>
<accession>B7GHM5</accession>
<keyword id="KW-0032">Aminotransferase</keyword>
<keyword id="KW-0093">Biotin biosynthesis</keyword>
<keyword id="KW-0963">Cytoplasm</keyword>
<keyword id="KW-0663">Pyridoxal phosphate</keyword>
<keyword id="KW-0949">S-adenosyl-L-methionine</keyword>
<keyword id="KW-0808">Transferase</keyword>
<proteinExistence type="inferred from homology"/>
<protein>
    <recommendedName>
        <fullName evidence="1">Adenosylmethionine-8-amino-7-oxononanoate aminotransferase</fullName>
        <ecNumber evidence="1">2.6.1.62</ecNumber>
    </recommendedName>
    <alternativeName>
        <fullName evidence="1">7,8-diamino-pelargonic acid aminotransferase</fullName>
        <shortName evidence="1">DAPA AT</shortName>
        <shortName evidence="1">DAPA aminotransferase</shortName>
    </alternativeName>
    <alternativeName>
        <fullName evidence="1">7,8-diaminononanoate synthase</fullName>
        <shortName evidence="1">DANS</shortName>
    </alternativeName>
    <alternativeName>
        <fullName evidence="1">Diaminopelargonic acid synthase</fullName>
    </alternativeName>
</protein>
<feature type="chain" id="PRO_0000411121" description="Adenosylmethionine-8-amino-7-oxononanoate aminotransferase">
    <location>
        <begin position="1"/>
        <end position="454"/>
    </location>
</feature>
<feature type="binding site" evidence="1">
    <location>
        <begin position="119"/>
        <end position="120"/>
    </location>
    <ligand>
        <name>pyridoxal 5'-phosphate</name>
        <dbReference type="ChEBI" id="CHEBI:597326"/>
    </ligand>
</feature>
<feature type="binding site" evidence="1">
    <location>
        <position position="152"/>
    </location>
    <ligand>
        <name>substrate</name>
    </ligand>
</feature>
<feature type="binding site" evidence="1">
    <location>
        <position position="257"/>
    </location>
    <ligand>
        <name>pyridoxal 5'-phosphate</name>
        <dbReference type="ChEBI" id="CHEBI:597326"/>
    </ligand>
</feature>
<feature type="binding site" evidence="1">
    <location>
        <position position="286"/>
    </location>
    <ligand>
        <name>substrate</name>
    </ligand>
</feature>
<feature type="binding site" evidence="1">
    <location>
        <position position="321"/>
    </location>
    <ligand>
        <name>substrate</name>
    </ligand>
</feature>
<feature type="binding site" evidence="1">
    <location>
        <position position="416"/>
    </location>
    <ligand>
        <name>substrate</name>
    </ligand>
</feature>
<feature type="site" description="Participates in the substrate recognition with KAPA and in a stacking interaction with the adenine ring of SAM" evidence="1">
    <location>
        <position position="23"/>
    </location>
</feature>
<feature type="modified residue" description="N6-(pyridoxal phosphate)lysine" evidence="1">
    <location>
        <position position="286"/>
    </location>
</feature>
<comment type="function">
    <text evidence="1">Catalyzes the transfer of the alpha-amino group from S-adenosyl-L-methionine (SAM) to 7-keto-8-aminopelargonic acid (KAPA) to form 7,8-diaminopelargonic acid (DAPA). It is the only aminotransferase known to utilize SAM as an amino donor.</text>
</comment>
<comment type="catalytic activity">
    <reaction evidence="1">
        <text>(8S)-8-amino-7-oxononanoate + S-adenosyl-L-methionine = S-adenosyl-4-methylsulfanyl-2-oxobutanoate + (7R,8S)-7,8-diammoniononanoate</text>
        <dbReference type="Rhea" id="RHEA:16861"/>
        <dbReference type="ChEBI" id="CHEBI:16490"/>
        <dbReference type="ChEBI" id="CHEBI:59789"/>
        <dbReference type="ChEBI" id="CHEBI:149468"/>
        <dbReference type="ChEBI" id="CHEBI:149469"/>
        <dbReference type="EC" id="2.6.1.62"/>
    </reaction>
</comment>
<comment type="cofactor">
    <cofactor evidence="1">
        <name>pyridoxal 5'-phosphate</name>
        <dbReference type="ChEBI" id="CHEBI:597326"/>
    </cofactor>
</comment>
<comment type="pathway">
    <text evidence="1">Cofactor biosynthesis; biotin biosynthesis; 7,8-diaminononanoate from 8-amino-7-oxononanoate (SAM route): step 1/1.</text>
</comment>
<comment type="subunit">
    <text evidence="1">Homodimer.</text>
</comment>
<comment type="subcellular location">
    <subcellularLocation>
        <location evidence="1">Cytoplasm</location>
    </subcellularLocation>
</comment>
<comment type="similarity">
    <text evidence="1">Belongs to the class-III pyridoxal-phosphate-dependent aminotransferase family. BioA subfamily.</text>
</comment>